<name>PGR1A_MOUSE</name>
<protein>
    <recommendedName>
        <fullName evidence="9">PAXIP1-associated glutamate-rich protein 1A</fullName>
    </recommendedName>
    <alternativeName>
        <fullName>PAXIP1-associated protein 1</fullName>
    </alternativeName>
    <alternativeName>
        <fullName>PTIP-associated protein 1</fullName>
    </alternativeName>
</protein>
<accession>Q99L02</accession>
<evidence type="ECO:0000250" key="1">
    <source>
        <dbReference type="UniProtKB" id="Q5M865"/>
    </source>
</evidence>
<evidence type="ECO:0000250" key="2">
    <source>
        <dbReference type="UniProtKB" id="Q9BTK6"/>
    </source>
</evidence>
<evidence type="ECO:0000256" key="3">
    <source>
        <dbReference type="SAM" id="MobiDB-lite"/>
    </source>
</evidence>
<evidence type="ECO:0000269" key="4">
    <source>
    </source>
</evidence>
<evidence type="ECO:0000269" key="5">
    <source>
    </source>
</evidence>
<evidence type="ECO:0000269" key="6">
    <source>
    </source>
</evidence>
<evidence type="ECO:0000305" key="7"/>
<evidence type="ECO:0000305" key="8">
    <source>
    </source>
</evidence>
<evidence type="ECO:0000312" key="9">
    <source>
        <dbReference type="MGI" id="MGI:1914528"/>
    </source>
</evidence>
<comment type="function">
    <text evidence="2 4 6 7 8">Its association with the histone methyltransferase MLL2/MLL3 complex is suggesting a role in epigenetic transcriptional activation. However, in association with PAXIP1/PTIP is proposed to function at least in part independently of the MLL2/MLL3 complex. Proposed to be recruited by PAXIP1 to sites of DNA damage where the PAGR1:PAXIP1 complex is required for cell survival in response to DNA damage independently of the MLL2/MLL3 complex (PubMed:19124460). However, its function in DNA damage has been questioned (PubMed:26744420). During immunoglobulin class switching in activated B-cells is involved in transcription regulation of downstream switch regions at the immunoglobulin heavy-chain (Igh) locus independently of the MLL2/MLL3 complex (PubMed:26744420). Involved in both estrogen receptor-regulated gene transcription and estrogen-stimulated G1/S cell-cycle transition (By similarity). Acts as a transcriptional cofactor for nuclear hormone receptors. Inhibits the induction properties of several steroid receptors such as NR3C1, AR and PPARG; the mechanism of inhibition appears to be gene-dependent (By similarity). May be involved in the regulation of the BMP pathway in extraembryonic development (PubMed:24633704).</text>
</comment>
<comment type="subunit">
    <text evidence="2 4 6">Component of the KMT2 family MLL2/MLL3 complex, at least composed of the histone methyltransferases KMT2D and/or KMT2C, the common subunits ASH2L, RBBP5, WDR5 and DPY30, and the complex type-specific subunits PAXIP1/PTIP, PAGR1, NCOA6 and KDM6A; PAXIP1 is required for the association with the MLL2/MLL3 complex (By similarity). Forms a constitutive complex with PAXIP1/PTIP independently of the MLL2/MLL3 complex (PubMed:19124460, PubMed:26744420). Interacts with NCOA1, ESR1, NR3C1, AR (By similarity).</text>
</comment>
<comment type="interaction">
    <interactant intactId="EBI-11667455">
        <id>Q99L02</id>
    </interactant>
    <interactant intactId="EBI-1395317">
        <id>Q6NZQ4</id>
        <label>Paxip1</label>
    </interactant>
    <organismsDiffer>false</organismsDiffer>
    <experiments>11</experiments>
</comment>
<comment type="subcellular location">
    <subcellularLocation>
        <location evidence="6">Nucleus</location>
    </subcellularLocation>
</comment>
<comment type="developmental stage">
    <text evidence="5">Expression first detected at 5.0-6.0 dpc in the extraembryonic region, at 7.5 dpc detected within the chorion; later the expression is expanding to the entire embryo.</text>
</comment>
<comment type="disruption phenotype">
    <text evidence="5">Normal germ layer specification and developmental patterning but limited anterior development and arrest by 8.5 dpc, likely due at least in part to defects in extraembryonic tissue.</text>
</comment>
<comment type="caution">
    <text evidence="7">The terminology of MLL proteins in mammalia is not consistent also concerning the terminology of MLL protein-containing complexes. The decribed MLL2/MLL3 complex is commonly described as MLL3/MLL4 complex in literature.</text>
</comment>
<sequence>MSLALGHGTIAGSTAAPLSEEGEVTSGLQALAVEDTGGPSVSASKAEEEGKGSQEEAGREGSRPEEALEAPSAASDERAEGEAEDWCVPCSDEEVELPANGQSWMPPPSEIQRLYELLATQGTLELQAEILPRRPPTPEAQSEEERSDEEPEAKEEEEEKPHMPTEFDFDDEPMTPKDSLIDRRRTPGSSARSQKREARLDKVLSDMKRHKKLEEQILRTGRDLFSLDSEGPSPTSPPLRSSGNSLFPRQRKY</sequence>
<reference key="1">
    <citation type="journal article" date="2005" name="Science">
        <title>The transcriptional landscape of the mammalian genome.</title>
        <authorList>
            <person name="Carninci P."/>
            <person name="Kasukawa T."/>
            <person name="Katayama S."/>
            <person name="Gough J."/>
            <person name="Frith M.C."/>
            <person name="Maeda N."/>
            <person name="Oyama R."/>
            <person name="Ravasi T."/>
            <person name="Lenhard B."/>
            <person name="Wells C."/>
            <person name="Kodzius R."/>
            <person name="Shimokawa K."/>
            <person name="Bajic V.B."/>
            <person name="Brenner S.E."/>
            <person name="Batalov S."/>
            <person name="Forrest A.R."/>
            <person name="Zavolan M."/>
            <person name="Davis M.J."/>
            <person name="Wilming L.G."/>
            <person name="Aidinis V."/>
            <person name="Allen J.E."/>
            <person name="Ambesi-Impiombato A."/>
            <person name="Apweiler R."/>
            <person name="Aturaliya R.N."/>
            <person name="Bailey T.L."/>
            <person name="Bansal M."/>
            <person name="Baxter L."/>
            <person name="Beisel K.W."/>
            <person name="Bersano T."/>
            <person name="Bono H."/>
            <person name="Chalk A.M."/>
            <person name="Chiu K.P."/>
            <person name="Choudhary V."/>
            <person name="Christoffels A."/>
            <person name="Clutterbuck D.R."/>
            <person name="Crowe M.L."/>
            <person name="Dalla E."/>
            <person name="Dalrymple B.P."/>
            <person name="de Bono B."/>
            <person name="Della Gatta G."/>
            <person name="di Bernardo D."/>
            <person name="Down T."/>
            <person name="Engstrom P."/>
            <person name="Fagiolini M."/>
            <person name="Faulkner G."/>
            <person name="Fletcher C.F."/>
            <person name="Fukushima T."/>
            <person name="Furuno M."/>
            <person name="Futaki S."/>
            <person name="Gariboldi M."/>
            <person name="Georgii-Hemming P."/>
            <person name="Gingeras T.R."/>
            <person name="Gojobori T."/>
            <person name="Green R.E."/>
            <person name="Gustincich S."/>
            <person name="Harbers M."/>
            <person name="Hayashi Y."/>
            <person name="Hensch T.K."/>
            <person name="Hirokawa N."/>
            <person name="Hill D."/>
            <person name="Huminiecki L."/>
            <person name="Iacono M."/>
            <person name="Ikeo K."/>
            <person name="Iwama A."/>
            <person name="Ishikawa T."/>
            <person name="Jakt M."/>
            <person name="Kanapin A."/>
            <person name="Katoh M."/>
            <person name="Kawasawa Y."/>
            <person name="Kelso J."/>
            <person name="Kitamura H."/>
            <person name="Kitano H."/>
            <person name="Kollias G."/>
            <person name="Krishnan S.P."/>
            <person name="Kruger A."/>
            <person name="Kummerfeld S.K."/>
            <person name="Kurochkin I.V."/>
            <person name="Lareau L.F."/>
            <person name="Lazarevic D."/>
            <person name="Lipovich L."/>
            <person name="Liu J."/>
            <person name="Liuni S."/>
            <person name="McWilliam S."/>
            <person name="Madan Babu M."/>
            <person name="Madera M."/>
            <person name="Marchionni L."/>
            <person name="Matsuda H."/>
            <person name="Matsuzawa S."/>
            <person name="Miki H."/>
            <person name="Mignone F."/>
            <person name="Miyake S."/>
            <person name="Morris K."/>
            <person name="Mottagui-Tabar S."/>
            <person name="Mulder N."/>
            <person name="Nakano N."/>
            <person name="Nakauchi H."/>
            <person name="Ng P."/>
            <person name="Nilsson R."/>
            <person name="Nishiguchi S."/>
            <person name="Nishikawa S."/>
            <person name="Nori F."/>
            <person name="Ohara O."/>
            <person name="Okazaki Y."/>
            <person name="Orlando V."/>
            <person name="Pang K.C."/>
            <person name="Pavan W.J."/>
            <person name="Pavesi G."/>
            <person name="Pesole G."/>
            <person name="Petrovsky N."/>
            <person name="Piazza S."/>
            <person name="Reed J."/>
            <person name="Reid J.F."/>
            <person name="Ring B.Z."/>
            <person name="Ringwald M."/>
            <person name="Rost B."/>
            <person name="Ruan Y."/>
            <person name="Salzberg S.L."/>
            <person name="Sandelin A."/>
            <person name="Schneider C."/>
            <person name="Schoenbach C."/>
            <person name="Sekiguchi K."/>
            <person name="Semple C.A."/>
            <person name="Seno S."/>
            <person name="Sessa L."/>
            <person name="Sheng Y."/>
            <person name="Shibata Y."/>
            <person name="Shimada H."/>
            <person name="Shimada K."/>
            <person name="Silva D."/>
            <person name="Sinclair B."/>
            <person name="Sperling S."/>
            <person name="Stupka E."/>
            <person name="Sugiura K."/>
            <person name="Sultana R."/>
            <person name="Takenaka Y."/>
            <person name="Taki K."/>
            <person name="Tammoja K."/>
            <person name="Tan S.L."/>
            <person name="Tang S."/>
            <person name="Taylor M.S."/>
            <person name="Tegner J."/>
            <person name="Teichmann S.A."/>
            <person name="Ueda H.R."/>
            <person name="van Nimwegen E."/>
            <person name="Verardo R."/>
            <person name="Wei C.L."/>
            <person name="Yagi K."/>
            <person name="Yamanishi H."/>
            <person name="Zabarovsky E."/>
            <person name="Zhu S."/>
            <person name="Zimmer A."/>
            <person name="Hide W."/>
            <person name="Bult C."/>
            <person name="Grimmond S.M."/>
            <person name="Teasdale R.D."/>
            <person name="Liu E.T."/>
            <person name="Brusic V."/>
            <person name="Quackenbush J."/>
            <person name="Wahlestedt C."/>
            <person name="Mattick J.S."/>
            <person name="Hume D.A."/>
            <person name="Kai C."/>
            <person name="Sasaki D."/>
            <person name="Tomaru Y."/>
            <person name="Fukuda S."/>
            <person name="Kanamori-Katayama M."/>
            <person name="Suzuki M."/>
            <person name="Aoki J."/>
            <person name="Arakawa T."/>
            <person name="Iida J."/>
            <person name="Imamura K."/>
            <person name="Itoh M."/>
            <person name="Kato T."/>
            <person name="Kawaji H."/>
            <person name="Kawagashira N."/>
            <person name="Kawashima T."/>
            <person name="Kojima M."/>
            <person name="Kondo S."/>
            <person name="Konno H."/>
            <person name="Nakano K."/>
            <person name="Ninomiya N."/>
            <person name="Nishio T."/>
            <person name="Okada M."/>
            <person name="Plessy C."/>
            <person name="Shibata K."/>
            <person name="Shiraki T."/>
            <person name="Suzuki S."/>
            <person name="Tagami M."/>
            <person name="Waki K."/>
            <person name="Watahiki A."/>
            <person name="Okamura-Oho Y."/>
            <person name="Suzuki H."/>
            <person name="Kawai J."/>
            <person name="Hayashizaki Y."/>
        </authorList>
    </citation>
    <scope>NUCLEOTIDE SEQUENCE [LARGE SCALE MRNA]</scope>
    <source>
        <strain>C57BL/6J</strain>
    </source>
</reference>
<reference key="2">
    <citation type="journal article" date="2004" name="Genome Res.">
        <title>The status, quality, and expansion of the NIH full-length cDNA project: the Mammalian Gene Collection (MGC).</title>
        <authorList>
            <consortium name="The MGC Project Team"/>
        </authorList>
    </citation>
    <scope>NUCLEOTIDE SEQUENCE [LARGE SCALE MRNA]</scope>
    <source>
        <strain>FVB/N</strain>
        <tissue>Mammary tumor</tissue>
    </source>
</reference>
<reference key="3">
    <citation type="journal article" date="2009" name="J. Biol. Chem.">
        <title>Accumulation of Pax2 transactivation domain interaction protein (PTIP) at sites of DNA breaks via RNF8-dependent pathway is required for cell survival after DNA damage.</title>
        <authorList>
            <person name="Gong Z."/>
            <person name="Cho Y.-W."/>
            <person name="Kim J.-E."/>
            <person name="Ge K."/>
            <person name="Chen J."/>
        </authorList>
    </citation>
    <scope>FUNCTION</scope>
    <scope>INTERACTION WITH PAXIP1</scope>
</reference>
<reference key="4">
    <citation type="journal article" date="2014" name="Dev. Dyn.">
        <title>Loss of function of mouse Pax-Interacting Protein 1-associated glutamate rich protein 1a (Pagr1a) leads to reduced Bmp2 expression and defects in chorion and amnion development.</title>
        <authorList>
            <person name="Kumar A."/>
            <person name="Lualdi M."/>
            <person name="Loncarek J."/>
            <person name="Cho Y.W."/>
            <person name="Lee J.E."/>
            <person name="Ge K."/>
            <person name="Kuehn M.R."/>
        </authorList>
    </citation>
    <scope>TISSUE SPECIFICITY</scope>
    <scope>DEVELOPMENTAL STAGE</scope>
    <scope>DISRUPTION PHENOTYPE</scope>
    <scope>FUNCTION</scope>
</reference>
<reference key="5">
    <citation type="journal article" date="2016" name="Genes Dev.">
        <title>A PTIP-PA1 subcomplex promotes transcription for IgH class switching independently from the associated MLL3/MLL4 methyltransferase complex.</title>
        <authorList>
            <person name="Starnes L.M."/>
            <person name="Su D."/>
            <person name="Pikkupeura L.M."/>
            <person name="Weinert B.T."/>
            <person name="Santos M.A."/>
            <person name="Mund A."/>
            <person name="Soria R."/>
            <person name="Cho Y.W."/>
            <person name="Pozdnyakova I."/>
            <person name="Kubec Hoejfeldt M."/>
            <person name="Vala A."/>
            <person name="Yang W."/>
            <person name="Lopez-Mendez B."/>
            <person name="Lee J.E."/>
            <person name="Peng W."/>
            <person name="Yuan J."/>
            <person name="Ge K."/>
            <person name="Montoya G."/>
            <person name="Nussenzweig A."/>
            <person name="Choudhary C."/>
            <person name="Daniel J.A."/>
        </authorList>
    </citation>
    <scope>FUNCTION</scope>
    <scope>INTERACTION WITH PAXIP1</scope>
    <scope>SUBCELLULAR LOCATION</scope>
</reference>
<keyword id="KW-0227">DNA damage</keyword>
<keyword id="KW-0233">DNA recombination</keyword>
<keyword id="KW-0234">DNA repair</keyword>
<keyword id="KW-0539">Nucleus</keyword>
<keyword id="KW-0597">Phosphoprotein</keyword>
<keyword id="KW-1185">Reference proteome</keyword>
<keyword id="KW-0804">Transcription</keyword>
<keyword id="KW-0805">Transcription regulation</keyword>
<organism>
    <name type="scientific">Mus musculus</name>
    <name type="common">Mouse</name>
    <dbReference type="NCBI Taxonomy" id="10090"/>
    <lineage>
        <taxon>Eukaryota</taxon>
        <taxon>Metazoa</taxon>
        <taxon>Chordata</taxon>
        <taxon>Craniata</taxon>
        <taxon>Vertebrata</taxon>
        <taxon>Euteleostomi</taxon>
        <taxon>Mammalia</taxon>
        <taxon>Eutheria</taxon>
        <taxon>Euarchontoglires</taxon>
        <taxon>Glires</taxon>
        <taxon>Rodentia</taxon>
        <taxon>Myomorpha</taxon>
        <taxon>Muroidea</taxon>
        <taxon>Muridae</taxon>
        <taxon>Murinae</taxon>
        <taxon>Mus</taxon>
        <taxon>Mus</taxon>
    </lineage>
</organism>
<proteinExistence type="evidence at protein level"/>
<feature type="chain" id="PRO_0000248335" description="PAXIP1-associated glutamate-rich protein 1A" evidence="7">
    <location>
        <begin position="1"/>
        <end position="253"/>
    </location>
</feature>
<feature type="region of interest" description="Disordered" evidence="3">
    <location>
        <begin position="1"/>
        <end position="108"/>
    </location>
</feature>
<feature type="region of interest" description="Sufficient for interaction with NCOA1" evidence="2">
    <location>
        <begin position="115"/>
        <end position="159"/>
    </location>
</feature>
<feature type="region of interest" description="Disordered" evidence="3">
    <location>
        <begin position="126"/>
        <end position="253"/>
    </location>
</feature>
<feature type="region of interest" description="Sufficient for interaction with ESR1" evidence="2">
    <location>
        <begin position="160"/>
        <end position="253"/>
    </location>
</feature>
<feature type="compositionally biased region" description="Basic and acidic residues" evidence="3">
    <location>
        <begin position="45"/>
        <end position="66"/>
    </location>
</feature>
<feature type="compositionally biased region" description="Acidic residues" evidence="3">
    <location>
        <begin position="141"/>
        <end position="158"/>
    </location>
</feature>
<feature type="compositionally biased region" description="Basic and acidic residues" evidence="3">
    <location>
        <begin position="194"/>
        <end position="222"/>
    </location>
</feature>
<feature type="compositionally biased region" description="Polar residues" evidence="3">
    <location>
        <begin position="238"/>
        <end position="247"/>
    </location>
</feature>
<feature type="modified residue" description="Phosphothreonine" evidence="1">
    <location>
        <position position="137"/>
    </location>
</feature>
<feature type="modified residue" description="Phosphoserine" evidence="1">
    <location>
        <position position="142"/>
    </location>
</feature>
<feature type="modified residue" description="Phosphoserine" evidence="1">
    <location>
        <position position="147"/>
    </location>
</feature>
<feature type="modified residue" description="Phosphoserine" evidence="1">
    <location>
        <position position="236"/>
    </location>
</feature>
<gene>
    <name evidence="9" type="primary">Pagr1a</name>
    <name evidence="9" type="synonym">Pa1</name>
    <name type="synonym">Pagr</name>
</gene>
<dbReference type="EMBL" id="AK082775">
    <property type="protein sequence ID" value="BAC38614.1"/>
    <property type="molecule type" value="mRNA"/>
</dbReference>
<dbReference type="EMBL" id="BC003932">
    <property type="protein sequence ID" value="AAH03932.1"/>
    <property type="molecule type" value="mRNA"/>
</dbReference>
<dbReference type="CCDS" id="CCDS21854.1"/>
<dbReference type="RefSeq" id="NP_084516.1">
    <property type="nucleotide sequence ID" value="NM_030240.1"/>
</dbReference>
<dbReference type="SMR" id="Q99L02"/>
<dbReference type="BioGRID" id="212067">
    <property type="interactions" value="3"/>
</dbReference>
<dbReference type="FunCoup" id="Q99L02">
    <property type="interactions" value="1788"/>
</dbReference>
<dbReference type="IntAct" id="Q99L02">
    <property type="interactions" value="1"/>
</dbReference>
<dbReference type="STRING" id="10090.ENSMUSP00000144243"/>
<dbReference type="GlyGen" id="Q99L02">
    <property type="glycosylation" value="1 site"/>
</dbReference>
<dbReference type="iPTMnet" id="Q99L02"/>
<dbReference type="PhosphoSitePlus" id="Q99L02"/>
<dbReference type="jPOST" id="Q99L02"/>
<dbReference type="PaxDb" id="10090-ENSMUSP00000032918"/>
<dbReference type="PeptideAtlas" id="Q99L02"/>
<dbReference type="ProteomicsDB" id="288185"/>
<dbReference type="Pumba" id="Q99L02"/>
<dbReference type="DNASU" id="67278"/>
<dbReference type="Ensembl" id="ENSMUST00000200948.2">
    <property type="protein sequence ID" value="ENSMUSP00000144469.2"/>
    <property type="gene ID" value="ENSMUSG00000030680.7"/>
</dbReference>
<dbReference type="Ensembl" id="ENSMUST00000202798.2">
    <property type="protein sequence ID" value="ENSMUSP00000144243.2"/>
    <property type="gene ID" value="ENSMUSG00000107068.2"/>
</dbReference>
<dbReference type="GeneID" id="67278"/>
<dbReference type="KEGG" id="mmu:67278"/>
<dbReference type="UCSC" id="uc009jtx.1">
    <property type="organism name" value="mouse"/>
</dbReference>
<dbReference type="AGR" id="MGI:1914528"/>
<dbReference type="CTD" id="67278"/>
<dbReference type="MGI" id="MGI:1914528">
    <property type="gene designation" value="Pagr1a"/>
</dbReference>
<dbReference type="VEuPathDB" id="HostDB:ENSMUSG00000030680"/>
<dbReference type="VEuPathDB" id="HostDB:ENSMUSG00000107068"/>
<dbReference type="eggNOG" id="ENOG502S0T8">
    <property type="taxonomic scope" value="Eukaryota"/>
</dbReference>
<dbReference type="GeneTree" id="ENSGT00390000016049"/>
<dbReference type="HOGENOM" id="CLU_088613_1_0_1"/>
<dbReference type="InParanoid" id="Q99L02"/>
<dbReference type="OMA" id="HIMRTGR"/>
<dbReference type="OrthoDB" id="10067843at2759"/>
<dbReference type="PhylomeDB" id="Q99L02"/>
<dbReference type="TreeFam" id="TF326621"/>
<dbReference type="Reactome" id="R-MMU-9772755">
    <property type="pathway name" value="Formation of WDR5-containing histone-modifying complexes"/>
</dbReference>
<dbReference type="Reactome" id="R-MMU-9818564">
    <property type="pathway name" value="Epigenetic regulation of gene expression by MLL3 and MLL4 complexes"/>
</dbReference>
<dbReference type="BioGRID-ORCS" id="67278">
    <property type="hits" value="9 hits in 83 CRISPR screens"/>
</dbReference>
<dbReference type="ChiTaRS" id="Pagr1a">
    <property type="organism name" value="mouse"/>
</dbReference>
<dbReference type="PRO" id="PR:Q99L02"/>
<dbReference type="Proteomes" id="UP000000589">
    <property type="component" value="Chromosome 7"/>
</dbReference>
<dbReference type="RNAct" id="Q99L02">
    <property type="molecule type" value="protein"/>
</dbReference>
<dbReference type="Bgee" id="ENSMUSG00000030680">
    <property type="expression patterns" value="Expressed in cerebellar cortex and 66 other cell types or tissues"/>
</dbReference>
<dbReference type="ExpressionAtlas" id="Q99L02">
    <property type="expression patterns" value="baseline and differential"/>
</dbReference>
<dbReference type="GO" id="GO:0035097">
    <property type="term" value="C:histone methyltransferase complex"/>
    <property type="evidence" value="ECO:0000314"/>
    <property type="project" value="MGI"/>
</dbReference>
<dbReference type="GO" id="GO:0005654">
    <property type="term" value="C:nucleoplasm"/>
    <property type="evidence" value="ECO:0000304"/>
    <property type="project" value="Reactome"/>
</dbReference>
<dbReference type="GO" id="GO:0005634">
    <property type="term" value="C:nucleus"/>
    <property type="evidence" value="ECO:0000266"/>
    <property type="project" value="MGI"/>
</dbReference>
<dbReference type="GO" id="GO:0060717">
    <property type="term" value="P:chorion development"/>
    <property type="evidence" value="ECO:0000315"/>
    <property type="project" value="MGI"/>
</dbReference>
<dbReference type="GO" id="GO:0006974">
    <property type="term" value="P:DNA damage response"/>
    <property type="evidence" value="ECO:0000315"/>
    <property type="project" value="UniProtKB"/>
</dbReference>
<dbReference type="GO" id="GO:0006310">
    <property type="term" value="P:DNA recombination"/>
    <property type="evidence" value="ECO:0007669"/>
    <property type="project" value="UniProtKB-KW"/>
</dbReference>
<dbReference type="GO" id="GO:0006281">
    <property type="term" value="P:DNA repair"/>
    <property type="evidence" value="ECO:0007669"/>
    <property type="project" value="UniProtKB-KW"/>
</dbReference>
<dbReference type="GO" id="GO:0048304">
    <property type="term" value="P:positive regulation of isotype switching to IgG isotypes"/>
    <property type="evidence" value="ECO:0000315"/>
    <property type="project" value="UniProtKB"/>
</dbReference>
<dbReference type="GO" id="GO:1902749">
    <property type="term" value="P:regulation of cell cycle G2/M phase transition"/>
    <property type="evidence" value="ECO:0000315"/>
    <property type="project" value="UniProtKB"/>
</dbReference>
<dbReference type="InterPro" id="IPR028213">
    <property type="entry name" value="PA1"/>
</dbReference>
<dbReference type="PANTHER" id="PTHR28467">
    <property type="entry name" value="PAXIP1-ASSOCIATED GLUTAMATE-RICH PROTEIN 1"/>
    <property type="match status" value="1"/>
</dbReference>
<dbReference type="PANTHER" id="PTHR28467:SF1">
    <property type="entry name" value="PAXIP1-ASSOCIATED GLUTAMATE-RICH PROTEIN 1"/>
    <property type="match status" value="1"/>
</dbReference>
<dbReference type="Pfam" id="PF15364">
    <property type="entry name" value="PAXIP1_C"/>
    <property type="match status" value="1"/>
</dbReference>